<name>PF41_PLAF7</name>
<keyword id="KW-0002">3D-structure</keyword>
<keyword id="KW-1003">Cell membrane</keyword>
<keyword id="KW-1015">Disulfide bond</keyword>
<keyword id="KW-0325">Glycoprotein</keyword>
<keyword id="KW-0461">Malaria</keyword>
<keyword id="KW-0472">Membrane</keyword>
<keyword id="KW-1185">Reference proteome</keyword>
<keyword id="KW-0677">Repeat</keyword>
<keyword id="KW-0732">Signal</keyword>
<reference key="1">
    <citation type="journal article" date="2002" name="Nature">
        <title>Genome sequence of the human malaria parasite Plasmodium falciparum.</title>
        <authorList>
            <person name="Gardner M.J."/>
            <person name="Hall N."/>
            <person name="Fung E."/>
            <person name="White O."/>
            <person name="Berriman M."/>
            <person name="Hyman R.W."/>
            <person name="Carlton J.M."/>
            <person name="Pain A."/>
            <person name="Nelson K.E."/>
            <person name="Bowman S."/>
            <person name="Paulsen I.T."/>
            <person name="James K.D."/>
            <person name="Eisen J.A."/>
            <person name="Rutherford K.M."/>
            <person name="Salzberg S.L."/>
            <person name="Craig A."/>
            <person name="Kyes S."/>
            <person name="Chan M.-S."/>
            <person name="Nene V."/>
            <person name="Shallom S.J."/>
            <person name="Suh B."/>
            <person name="Peterson J."/>
            <person name="Angiuoli S."/>
            <person name="Pertea M."/>
            <person name="Allen J."/>
            <person name="Selengut J."/>
            <person name="Haft D."/>
            <person name="Mather M.W."/>
            <person name="Vaidya A.B."/>
            <person name="Martin D.M.A."/>
            <person name="Fairlamb A.H."/>
            <person name="Fraunholz M.J."/>
            <person name="Roos D.S."/>
            <person name="Ralph S.A."/>
            <person name="McFadden G.I."/>
            <person name="Cummings L.M."/>
            <person name="Subramanian G.M."/>
            <person name="Mungall C."/>
            <person name="Venter J.C."/>
            <person name="Carucci D.J."/>
            <person name="Hoffman S.L."/>
            <person name="Newbold C."/>
            <person name="Davis R.W."/>
            <person name="Fraser C.M."/>
            <person name="Barrell B.G."/>
        </authorList>
    </citation>
    <scope>NUCLEOTIDE SEQUENCE [LARGE SCALE GENOMIC DNA]</scope>
    <source>
        <strain>3D7</strain>
    </source>
</reference>
<reference key="2">
    <citation type="journal article" date="2002" name="Nature">
        <title>Sequence of Plasmodium falciparum chromosomes 1, 3-9 and 13.</title>
        <authorList>
            <person name="Hall N."/>
            <person name="Pain A."/>
            <person name="Berriman M."/>
            <person name="Churcher C.M."/>
            <person name="Harris B."/>
            <person name="Harris D."/>
            <person name="Mungall K.L."/>
            <person name="Bowman S."/>
            <person name="Atkin R."/>
            <person name="Baker S."/>
            <person name="Barron A."/>
            <person name="Brooks K."/>
            <person name="Buckee C.O."/>
            <person name="Burrows C."/>
            <person name="Cherevach I."/>
            <person name="Chillingworth C."/>
            <person name="Chillingworth T."/>
            <person name="Christodoulou Z."/>
            <person name="Clark L."/>
            <person name="Clark R."/>
            <person name="Corton C."/>
            <person name="Cronin A."/>
            <person name="Davies R.M."/>
            <person name="Davis P."/>
            <person name="Dear P."/>
            <person name="Dearden F."/>
            <person name="Doggett J."/>
            <person name="Feltwell T."/>
            <person name="Goble A."/>
            <person name="Goodhead I."/>
            <person name="Gwilliam R."/>
            <person name="Hamlin N."/>
            <person name="Hance Z."/>
            <person name="Harper D."/>
            <person name="Hauser H."/>
            <person name="Hornsby T."/>
            <person name="Holroyd S."/>
            <person name="Horrocks P."/>
            <person name="Humphray S."/>
            <person name="Jagels K."/>
            <person name="James K.D."/>
            <person name="Johnson D."/>
            <person name="Kerhornou A."/>
            <person name="Knights A."/>
            <person name="Konfortov B."/>
            <person name="Kyes S."/>
            <person name="Larke N."/>
            <person name="Lawson D."/>
            <person name="Lennard N."/>
            <person name="Line A."/>
            <person name="Maddison M."/>
            <person name="Mclean J."/>
            <person name="Mooney P."/>
            <person name="Moule S."/>
            <person name="Murphy L."/>
            <person name="Oliver K."/>
            <person name="Ormond D."/>
            <person name="Price C."/>
            <person name="Quail M.A."/>
            <person name="Rabbinowitsch E."/>
            <person name="Rajandream M.A."/>
            <person name="Rutter S."/>
            <person name="Rutherford K.M."/>
            <person name="Sanders M."/>
            <person name="Simmonds M."/>
            <person name="Seeger K."/>
            <person name="Sharp S."/>
            <person name="Smith R."/>
            <person name="Squares R."/>
            <person name="Squares S."/>
            <person name="Stevens K."/>
            <person name="Taylor K."/>
            <person name="Tivey A."/>
            <person name="Unwin L."/>
            <person name="Whitehead S."/>
            <person name="Woodward J.R."/>
            <person name="Sulston J.E."/>
            <person name="Craig A."/>
            <person name="Newbold C."/>
            <person name="Barrell B.G."/>
        </authorList>
    </citation>
    <scope>NUCLEOTIDE SEQUENCE [LARGE SCALE GENOMIC DNA]</scope>
    <source>
        <strain>3D7</strain>
    </source>
</reference>
<reference key="3">
    <citation type="journal article" date="2005" name="J. Biol. Chem.">
        <title>Distinct protein classes including novel merozoite surface antigens in Raft-like membranes of Plasmodium falciparum.</title>
        <authorList>
            <person name="Sanders P.R."/>
            <person name="Gilson P.R."/>
            <person name="Cantin G.T."/>
            <person name="Greenbaum D.C."/>
            <person name="Nebl T."/>
            <person name="Carucci D.J."/>
            <person name="McConville M.J."/>
            <person name="Schofield L."/>
            <person name="Hodder A.N."/>
            <person name="Yates J.R. III"/>
            <person name="Crabb B.S."/>
        </authorList>
    </citation>
    <scope>SUBCELLULAR LOCATION</scope>
    <scope>DEVELOPMENTAL STAGE</scope>
</reference>
<reference key="4">
    <citation type="journal article" date="2012" name="PLoS ONE">
        <title>Biochemical and functional analysis of two Plasmodium falciparum blood-stage 6-cys proteins: P12 and P41.</title>
        <authorList>
            <person name="Taechalertpaisarn T."/>
            <person name="Crosnier C."/>
            <person name="Bartholdson S.J."/>
            <person name="Hodder A.N."/>
            <person name="Thompson J."/>
            <person name="Bustamante L.Y."/>
            <person name="Wilson D.W."/>
            <person name="Sanders P.R."/>
            <person name="Wright G.J."/>
            <person name="Rayner J.C."/>
            <person name="Cowman A.F."/>
            <person name="Gilson P.R."/>
            <person name="Crabb B.S."/>
        </authorList>
    </citation>
    <scope>SUBCELLULAR LOCATION</scope>
    <scope>CLEAVAGE</scope>
    <scope>DEVELOPMENTAL STAGE</scope>
    <scope>DISRUPTION PHENOTYPE</scope>
    <scope>INTERACTION WITH PF12</scope>
</reference>
<reference key="5">
    <citation type="journal article" date="2013" name="J. Biol. Chem.">
        <title>Structural and biochemical characterization of Plasmodium falciparum 12 (Pf12) reveals a unique interdomain organization and the potential for an antiparallel arrangement with Pf41.</title>
        <authorList>
            <person name="Tonkin M.L."/>
            <person name="Arredondo S.A."/>
            <person name="Loveless B.C."/>
            <person name="Serpa J.J."/>
            <person name="Makepeace K.A."/>
            <person name="Sundar N."/>
            <person name="Petrotchenko E.V."/>
            <person name="Miller L.H."/>
            <person name="Grigg M.E."/>
            <person name="Boulanger M.J."/>
        </authorList>
    </citation>
    <scope>INTERACTION WITH PF12</scope>
</reference>
<feature type="signal peptide" evidence="2">
    <location>
        <begin position="1"/>
        <end position="20"/>
    </location>
</feature>
<feature type="chain" id="PRO_0000423583" description="Merozoite surface protein P41">
    <location>
        <begin position="21"/>
        <end position="378"/>
    </location>
</feature>
<feature type="chain" id="PRO_0000423584" description="Merozoite surface protein P41, processed form">
    <location>
        <begin position="21"/>
        <end status="unknown"/>
    </location>
</feature>
<feature type="domain" description="6-Cys 1">
    <location>
        <begin position="21"/>
        <end position="133"/>
    </location>
</feature>
<feature type="domain" description="6-Cys 2">
    <location>
        <begin position="241"/>
        <end position="375"/>
    </location>
</feature>
<feature type="glycosylation site" description="N-linked (GlcNAc...) asparagine" evidence="2">
    <location>
        <position position="77"/>
    </location>
</feature>
<feature type="glycosylation site" description="N-linked (GlcNAc...) asparagine" evidence="2">
    <location>
        <position position="149"/>
    </location>
</feature>
<feature type="glycosylation site" description="N-linked (GlcNAc...) asparagine" evidence="2">
    <location>
        <position position="182"/>
    </location>
</feature>
<feature type="glycosylation site" description="N-linked (GlcNAc...) asparagine" evidence="2">
    <location>
        <position position="205"/>
    </location>
</feature>
<feature type="glycosylation site" description="N-linked (GlcNAc...) asparagine" evidence="2">
    <location>
        <position position="351"/>
    </location>
</feature>
<feature type="disulfide bond" evidence="1">
    <location>
        <begin position="25"/>
        <end position="42"/>
    </location>
</feature>
<feature type="disulfide bond" evidence="1">
    <location>
        <begin position="56"/>
        <end position="113"/>
    </location>
</feature>
<feature type="disulfide bond" evidence="1">
    <location>
        <begin position="64"/>
        <end position="111"/>
    </location>
</feature>
<feature type="disulfide bond" evidence="1">
    <location>
        <begin position="245"/>
        <end position="270"/>
    </location>
</feature>
<feature type="disulfide bond" evidence="1">
    <location>
        <begin position="284"/>
        <end position="348"/>
    </location>
</feature>
<feature type="disulfide bond" evidence="1">
    <location>
        <begin position="297"/>
        <end position="346"/>
    </location>
</feature>
<feature type="strand" evidence="6">
    <location>
        <begin position="22"/>
        <end position="26"/>
    </location>
</feature>
<feature type="helix" evidence="6">
    <location>
        <begin position="30"/>
        <end position="33"/>
    </location>
</feature>
<feature type="strand" evidence="6">
    <location>
        <begin position="36"/>
        <end position="46"/>
    </location>
</feature>
<feature type="strand" evidence="6">
    <location>
        <begin position="51"/>
        <end position="55"/>
    </location>
</feature>
<feature type="strand" evidence="7">
    <location>
        <begin position="57"/>
        <end position="59"/>
    </location>
</feature>
<feature type="turn" evidence="6">
    <location>
        <begin position="64"/>
        <end position="66"/>
    </location>
</feature>
<feature type="strand" evidence="6">
    <location>
        <begin position="67"/>
        <end position="70"/>
    </location>
</feature>
<feature type="strand" evidence="6">
    <location>
        <begin position="74"/>
        <end position="76"/>
    </location>
</feature>
<feature type="strand" evidence="6">
    <location>
        <begin position="80"/>
        <end position="82"/>
    </location>
</feature>
<feature type="helix" evidence="6">
    <location>
        <begin position="83"/>
        <end position="86"/>
    </location>
</feature>
<feature type="strand" evidence="6">
    <location>
        <begin position="91"/>
        <end position="93"/>
    </location>
</feature>
<feature type="strand" evidence="6">
    <location>
        <begin position="96"/>
        <end position="98"/>
    </location>
</feature>
<feature type="strand" evidence="6">
    <location>
        <begin position="107"/>
        <end position="115"/>
    </location>
</feature>
<feature type="helix" evidence="6">
    <location>
        <begin position="117"/>
        <end position="126"/>
    </location>
</feature>
<feature type="helix" evidence="6">
    <location>
        <begin position="127"/>
        <end position="129"/>
    </location>
</feature>
<feature type="helix" evidence="7">
    <location>
        <begin position="152"/>
        <end position="178"/>
    </location>
</feature>
<feature type="helix" evidence="7">
    <location>
        <begin position="196"/>
        <end position="199"/>
    </location>
</feature>
<feature type="strand" evidence="6">
    <location>
        <begin position="227"/>
        <end position="235"/>
    </location>
</feature>
<feature type="strand" evidence="6">
    <location>
        <begin position="242"/>
        <end position="246"/>
    </location>
</feature>
<feature type="strand" evidence="6">
    <location>
        <begin position="248"/>
        <end position="250"/>
    </location>
</feature>
<feature type="strand" evidence="6">
    <location>
        <begin position="255"/>
        <end position="261"/>
    </location>
</feature>
<feature type="strand" evidence="6">
    <location>
        <begin position="269"/>
        <end position="274"/>
    </location>
</feature>
<feature type="strand" evidence="6">
    <location>
        <begin position="279"/>
        <end position="283"/>
    </location>
</feature>
<feature type="strand" evidence="6">
    <location>
        <begin position="291"/>
        <end position="294"/>
    </location>
</feature>
<feature type="turn" evidence="6">
    <location>
        <begin position="295"/>
        <end position="299"/>
    </location>
</feature>
<feature type="strand" evidence="6">
    <location>
        <begin position="300"/>
        <end position="303"/>
    </location>
</feature>
<feature type="strand" evidence="6">
    <location>
        <begin position="306"/>
        <end position="309"/>
    </location>
</feature>
<feature type="helix" evidence="6">
    <location>
        <begin position="310"/>
        <end position="312"/>
    </location>
</feature>
<feature type="strand" evidence="6">
    <location>
        <begin position="318"/>
        <end position="320"/>
    </location>
</feature>
<feature type="strand" evidence="6">
    <location>
        <begin position="326"/>
        <end position="328"/>
    </location>
</feature>
<feature type="strand" evidence="6">
    <location>
        <begin position="330"/>
        <end position="333"/>
    </location>
</feature>
<feature type="strand" evidence="6">
    <location>
        <begin position="336"/>
        <end position="338"/>
    </location>
</feature>
<feature type="strand" evidence="6">
    <location>
        <begin position="342"/>
        <end position="349"/>
    </location>
</feature>
<feature type="helix" evidence="6">
    <location>
        <begin position="353"/>
        <end position="355"/>
    </location>
</feature>
<feature type="strand" evidence="6">
    <location>
        <begin position="358"/>
        <end position="363"/>
    </location>
</feature>
<proteinExistence type="evidence at protein level"/>
<comment type="subunit">
    <text>Heterodimer; heterodimerizes with PF12. May form an antiparallel heterodimer with PF12.</text>
</comment>
<comment type="subcellular location">
    <subcellularLocation>
        <location>Cell surface</location>
    </subcellularLocation>
    <subcellularLocation>
        <location>Cell membrane</location>
    </subcellularLocation>
    <text evidence="4">Present on the surface of merozoite.</text>
</comment>
<comment type="developmental stage">
    <text evidence="3 4">Specifically present in asexual blood stage parasites. First detected in the trophozoite stage, 30-40 hours post-invasion (HPI) and the proteins reaches peak expression in schizont stage, 40-48 HPI.</text>
</comment>
<comment type="PTM">
    <text evidence="4">Processed into a soluble form.</text>
</comment>
<comment type="disruption phenotype">
    <text evidence="4">No visible phenotype. Parasites grow at normal rates in vitro.</text>
</comment>
<comment type="miscellaneous">
    <text evidence="5">Does not have erythrocyte-receptor-binding ability.</text>
</comment>
<dbReference type="EMBL" id="AL844503">
    <property type="protein sequence ID" value="CAD49141.1"/>
    <property type="molecule type" value="Genomic_DNA"/>
</dbReference>
<dbReference type="RefSeq" id="XP_001351361.1">
    <property type="nucleotide sequence ID" value="XM_001351325.1"/>
</dbReference>
<dbReference type="PDB" id="4YS4">
    <property type="method" value="X-ray"/>
    <property type="resolution" value="2.45 A"/>
    <property type="chains" value="A=21-378"/>
</dbReference>
<dbReference type="PDB" id="7S7Q">
    <property type="method" value="X-ray"/>
    <property type="resolution" value="2.85 A"/>
    <property type="chains" value="A=20-368"/>
</dbReference>
<dbReference type="PDBsum" id="4YS4"/>
<dbReference type="PDBsum" id="7S7Q"/>
<dbReference type="SMR" id="Q8I1Y0"/>
<dbReference type="BioGRID" id="1207785">
    <property type="interactions" value="1"/>
</dbReference>
<dbReference type="FunCoup" id="Q8I1Y0">
    <property type="interactions" value="478"/>
</dbReference>
<dbReference type="STRING" id="36329.Q8I1Y0"/>
<dbReference type="GlyCosmos" id="Q8I1Y0">
    <property type="glycosylation" value="5 sites, No reported glycans"/>
</dbReference>
<dbReference type="PaxDb" id="5833-PFD0240c"/>
<dbReference type="EnsemblProtists" id="CAD49141">
    <property type="protein sequence ID" value="CAD49141"/>
    <property type="gene ID" value="PF3D7_0404900"/>
</dbReference>
<dbReference type="KEGG" id="pfa:PF3D7_0404900"/>
<dbReference type="VEuPathDB" id="PlasmoDB:PF3D7_0404900"/>
<dbReference type="HOGENOM" id="CLU_693510_0_0_1"/>
<dbReference type="InParanoid" id="Q8I1Y0"/>
<dbReference type="OMA" id="GKYAFYL"/>
<dbReference type="OrthoDB" id="392647at2759"/>
<dbReference type="PhylomeDB" id="Q8I1Y0"/>
<dbReference type="EvolutionaryTrace" id="Q8I1Y0"/>
<dbReference type="Proteomes" id="UP000001450">
    <property type="component" value="Chromosome 4"/>
</dbReference>
<dbReference type="GO" id="GO:0009986">
    <property type="term" value="C:cell surface"/>
    <property type="evidence" value="ECO:0000314"/>
    <property type="project" value="GeneDB"/>
</dbReference>
<dbReference type="GO" id="GO:0005886">
    <property type="term" value="C:plasma membrane"/>
    <property type="evidence" value="ECO:0007669"/>
    <property type="project" value="UniProtKB-SubCell"/>
</dbReference>
<dbReference type="GO" id="GO:0020004">
    <property type="term" value="C:symbiont-containing vacuolar space"/>
    <property type="evidence" value="ECO:0000314"/>
    <property type="project" value="GeneDB"/>
</dbReference>
<dbReference type="FunFam" id="2.60.40.2860:FF:000023">
    <property type="entry name" value="Merozoite surface protein P41"/>
    <property type="match status" value="1"/>
</dbReference>
<dbReference type="FunFam" id="2.60.40.2860:FF:000025">
    <property type="entry name" value="Transmission-blocking target antigen Pfs230"/>
    <property type="match status" value="1"/>
</dbReference>
<dbReference type="Gene3D" id="2.60.40.2860">
    <property type="match status" value="2"/>
</dbReference>
<dbReference type="InterPro" id="IPR010884">
    <property type="entry name" value="6_CYS_dom"/>
</dbReference>
<dbReference type="InterPro" id="IPR038160">
    <property type="entry name" value="6_CYS_dom_sf"/>
</dbReference>
<dbReference type="InterPro" id="IPR051444">
    <property type="entry name" value="Parasite_Repro/Invasion_Surf"/>
</dbReference>
<dbReference type="PANTHER" id="PTHR38796">
    <property type="match status" value="1"/>
</dbReference>
<dbReference type="PANTHER" id="PTHR38796:SF1">
    <property type="entry name" value="ANCHORED PROTEIN, PUTATIVE (AFU_ORTHOLOGUE AFUA_4G09600)-RELATED"/>
    <property type="match status" value="1"/>
</dbReference>
<dbReference type="Pfam" id="PF07422">
    <property type="entry name" value="s48_45"/>
    <property type="match status" value="2"/>
</dbReference>
<dbReference type="SMART" id="SM00970">
    <property type="entry name" value="s48_45"/>
    <property type="match status" value="2"/>
</dbReference>
<dbReference type="PROSITE" id="PS51701">
    <property type="entry name" value="6_CYS"/>
    <property type="match status" value="2"/>
</dbReference>
<protein>
    <recommendedName>
        <fullName>Merozoite surface protein P41</fullName>
    </recommendedName>
    <component>
        <recommendedName>
            <fullName>Merozoite surface protein P41, processed form</fullName>
        </recommendedName>
    </component>
</protein>
<accession>Q8I1Y0</accession>
<organism>
    <name type="scientific">Plasmodium falciparum (isolate 3D7)</name>
    <dbReference type="NCBI Taxonomy" id="36329"/>
    <lineage>
        <taxon>Eukaryota</taxon>
        <taxon>Sar</taxon>
        <taxon>Alveolata</taxon>
        <taxon>Apicomplexa</taxon>
        <taxon>Aconoidasida</taxon>
        <taxon>Haemosporida</taxon>
        <taxon>Plasmodiidae</taxon>
        <taxon>Plasmodium</taxon>
        <taxon>Plasmodium (Laverania)</taxon>
    </lineage>
</organism>
<gene>
    <name type="primary">PF41</name>
    <name type="ORF">PFD0240c</name>
</gene>
<evidence type="ECO:0000250" key="1"/>
<evidence type="ECO:0000255" key="2"/>
<evidence type="ECO:0000269" key="3">
    <source>
    </source>
</evidence>
<evidence type="ECO:0000269" key="4">
    <source>
    </source>
</evidence>
<evidence type="ECO:0000305" key="5">
    <source>
    </source>
</evidence>
<evidence type="ECO:0007829" key="6">
    <source>
        <dbReference type="PDB" id="4YS4"/>
    </source>
</evidence>
<evidence type="ECO:0007829" key="7">
    <source>
        <dbReference type="PDB" id="7S7Q"/>
    </source>
</evidence>
<sequence>MKGVIFCLVVLLWRQAWVSSKSHKCDFTKEKYLLSGEKEVSCEIDANPSDDITFICPNKIDSLCFHTVNISKNINQNKSTMSIQDLLYGSVVYGNTLFISPYVRTNTPFYCFCNLDTVTIQKFLKINRFLKDDDELSEADVMKHLKGGNVSEAQADEYLNKALNRFKKMKDLSKFFNDQADNTTKLNLPKSLNIPNDILNYDVYNSSNNRNDIVVKDEVTNKQIISKRGIMSVFVRSNNNVIKGCDFGNNNKNYFSHPISVAGKVNNKVCKIQGKPGELVGFKCAFEENGKVEPPNCFDQVLHKNKVTDLKTLIPGYASYTNKHSSKYPYYLKIPHFVNEQYTIQCKCKSNNSQNEYTFELDIQPGESEVVLNSFKTS</sequence>